<name>ACEK_BURM9</name>
<comment type="function">
    <text evidence="1">Bifunctional enzyme which can phosphorylate or dephosphorylate isocitrate dehydrogenase (IDH) on a specific serine residue. This is a regulatory mechanism which enables bacteria to bypass the Krebs cycle via the glyoxylate shunt in response to the source of carbon. When bacteria are grown on glucose, IDH is fully active and unphosphorylated, but when grown on acetate or ethanol, the activity of IDH declines drastically concomitant with its phosphorylation.</text>
</comment>
<comment type="catalytic activity">
    <reaction evidence="1">
        <text>L-seryl-[isocitrate dehydrogenase] + ATP = O-phospho-L-seryl-[isocitrate dehydrogenase] + ADP + H(+)</text>
        <dbReference type="Rhea" id="RHEA:43540"/>
        <dbReference type="Rhea" id="RHEA-COMP:10605"/>
        <dbReference type="Rhea" id="RHEA-COMP:10606"/>
        <dbReference type="ChEBI" id="CHEBI:15378"/>
        <dbReference type="ChEBI" id="CHEBI:29999"/>
        <dbReference type="ChEBI" id="CHEBI:30616"/>
        <dbReference type="ChEBI" id="CHEBI:83421"/>
        <dbReference type="ChEBI" id="CHEBI:456216"/>
        <dbReference type="EC" id="2.7.11.5"/>
    </reaction>
</comment>
<comment type="subcellular location">
    <subcellularLocation>
        <location evidence="1">Cytoplasm</location>
    </subcellularLocation>
</comment>
<comment type="similarity">
    <text evidence="1">Belongs to the AceK family.</text>
</comment>
<comment type="sequence caution" evidence="2">
    <conflict type="erroneous initiation">
        <sequence resource="EMBL-CDS" id="ABN01603"/>
    </conflict>
</comment>
<dbReference type="EC" id="2.7.11.5" evidence="1"/>
<dbReference type="EC" id="3.1.3.-" evidence="1"/>
<dbReference type="EMBL" id="CP000546">
    <property type="protein sequence ID" value="ABN01603.1"/>
    <property type="status" value="ALT_INIT"/>
    <property type="molecule type" value="Genomic_DNA"/>
</dbReference>
<dbReference type="RefSeq" id="WP_004525974.1">
    <property type="nucleotide sequence ID" value="NC_008836.1"/>
</dbReference>
<dbReference type="SMR" id="A2S7Q4"/>
<dbReference type="GeneID" id="93058891"/>
<dbReference type="KEGG" id="bml:BMA10229_A2008"/>
<dbReference type="HOGENOM" id="CLU_033804_1_1_4"/>
<dbReference type="Proteomes" id="UP000002283">
    <property type="component" value="Chromosome I"/>
</dbReference>
<dbReference type="GO" id="GO:0005737">
    <property type="term" value="C:cytoplasm"/>
    <property type="evidence" value="ECO:0007669"/>
    <property type="project" value="UniProtKB-SubCell"/>
</dbReference>
<dbReference type="GO" id="GO:0008772">
    <property type="term" value="F:[isocitrate dehydrogenase (NADP+)] kinase activity"/>
    <property type="evidence" value="ECO:0007669"/>
    <property type="project" value="UniProtKB-UniRule"/>
</dbReference>
<dbReference type="GO" id="GO:0016208">
    <property type="term" value="F:AMP binding"/>
    <property type="evidence" value="ECO:0007669"/>
    <property type="project" value="TreeGrafter"/>
</dbReference>
<dbReference type="GO" id="GO:0005524">
    <property type="term" value="F:ATP binding"/>
    <property type="evidence" value="ECO:0007669"/>
    <property type="project" value="UniProtKB-UniRule"/>
</dbReference>
<dbReference type="GO" id="GO:0004721">
    <property type="term" value="F:phosphoprotein phosphatase activity"/>
    <property type="evidence" value="ECO:0007669"/>
    <property type="project" value="UniProtKB-KW"/>
</dbReference>
<dbReference type="GO" id="GO:0004674">
    <property type="term" value="F:protein serine/threonine kinase activity"/>
    <property type="evidence" value="ECO:0007669"/>
    <property type="project" value="UniProtKB-KW"/>
</dbReference>
<dbReference type="GO" id="GO:0006006">
    <property type="term" value="P:glucose metabolic process"/>
    <property type="evidence" value="ECO:0007669"/>
    <property type="project" value="InterPro"/>
</dbReference>
<dbReference type="GO" id="GO:0006097">
    <property type="term" value="P:glyoxylate cycle"/>
    <property type="evidence" value="ECO:0007669"/>
    <property type="project" value="UniProtKB-UniRule"/>
</dbReference>
<dbReference type="GO" id="GO:0006099">
    <property type="term" value="P:tricarboxylic acid cycle"/>
    <property type="evidence" value="ECO:0007669"/>
    <property type="project" value="UniProtKB-UniRule"/>
</dbReference>
<dbReference type="HAMAP" id="MF_00747">
    <property type="entry name" value="AceK"/>
    <property type="match status" value="1"/>
</dbReference>
<dbReference type="InterPro" id="IPR046855">
    <property type="entry name" value="AceK_kinase"/>
</dbReference>
<dbReference type="InterPro" id="IPR046854">
    <property type="entry name" value="AceK_regulatory"/>
</dbReference>
<dbReference type="InterPro" id="IPR010452">
    <property type="entry name" value="Isocitrate_DH_AceK"/>
</dbReference>
<dbReference type="NCBIfam" id="NF002804">
    <property type="entry name" value="PRK02946.1"/>
    <property type="match status" value="1"/>
</dbReference>
<dbReference type="PANTHER" id="PTHR39559">
    <property type="match status" value="1"/>
</dbReference>
<dbReference type="PANTHER" id="PTHR39559:SF1">
    <property type="entry name" value="ISOCITRATE DEHYDROGENASE KINASE_PHOSPHATASE"/>
    <property type="match status" value="1"/>
</dbReference>
<dbReference type="Pfam" id="PF06315">
    <property type="entry name" value="AceK_kinase"/>
    <property type="match status" value="1"/>
</dbReference>
<dbReference type="Pfam" id="PF20423">
    <property type="entry name" value="AceK_regulatory"/>
    <property type="match status" value="1"/>
</dbReference>
<dbReference type="PIRSF" id="PIRSF000719">
    <property type="entry name" value="AceK"/>
    <property type="match status" value="1"/>
</dbReference>
<feature type="chain" id="PRO_0000315262" description="Isocitrate dehydrogenase kinase/phosphatase">
    <location>
        <begin position="1"/>
        <end position="603"/>
    </location>
</feature>
<feature type="active site" evidence="1">
    <location>
        <position position="383"/>
    </location>
</feature>
<feature type="binding site" evidence="1">
    <location>
        <begin position="327"/>
        <end position="333"/>
    </location>
    <ligand>
        <name>ATP</name>
        <dbReference type="ChEBI" id="CHEBI:30616"/>
    </ligand>
</feature>
<feature type="binding site" evidence="1">
    <location>
        <position position="348"/>
    </location>
    <ligand>
        <name>ATP</name>
        <dbReference type="ChEBI" id="CHEBI:30616"/>
    </ligand>
</feature>
<accession>A2S7Q4</accession>
<organism>
    <name type="scientific">Burkholderia mallei (strain NCTC 10229)</name>
    <dbReference type="NCBI Taxonomy" id="412022"/>
    <lineage>
        <taxon>Bacteria</taxon>
        <taxon>Pseudomonadati</taxon>
        <taxon>Pseudomonadota</taxon>
        <taxon>Betaproteobacteria</taxon>
        <taxon>Burkholderiales</taxon>
        <taxon>Burkholderiaceae</taxon>
        <taxon>Burkholderia</taxon>
        <taxon>pseudomallei group</taxon>
    </lineage>
</organism>
<keyword id="KW-0067">ATP-binding</keyword>
<keyword id="KW-0963">Cytoplasm</keyword>
<keyword id="KW-0329">Glyoxylate bypass</keyword>
<keyword id="KW-0378">Hydrolase</keyword>
<keyword id="KW-0418">Kinase</keyword>
<keyword id="KW-0547">Nucleotide-binding</keyword>
<keyword id="KW-0904">Protein phosphatase</keyword>
<keyword id="KW-0723">Serine/threonine-protein kinase</keyword>
<keyword id="KW-0808">Transferase</keyword>
<keyword id="KW-0816">Tricarboxylic acid cycle</keyword>
<gene>
    <name evidence="1" type="primary">aceK</name>
    <name type="ordered locus">BMA10229_A2008</name>
</gene>
<evidence type="ECO:0000255" key="1">
    <source>
        <dbReference type="HAMAP-Rule" id="MF_00747"/>
    </source>
</evidence>
<evidence type="ECO:0000305" key="2"/>
<proteinExistence type="inferred from homology"/>
<reference key="1">
    <citation type="journal article" date="2010" name="Genome Biol. Evol.">
        <title>Continuing evolution of Burkholderia mallei through genome reduction and large-scale rearrangements.</title>
        <authorList>
            <person name="Losada L."/>
            <person name="Ronning C.M."/>
            <person name="DeShazer D."/>
            <person name="Woods D."/>
            <person name="Fedorova N."/>
            <person name="Kim H.S."/>
            <person name="Shabalina S.A."/>
            <person name="Pearson T.R."/>
            <person name="Brinkac L."/>
            <person name="Tan P."/>
            <person name="Nandi T."/>
            <person name="Crabtree J."/>
            <person name="Badger J."/>
            <person name="Beckstrom-Sternberg S."/>
            <person name="Saqib M."/>
            <person name="Schutzer S.E."/>
            <person name="Keim P."/>
            <person name="Nierman W.C."/>
        </authorList>
    </citation>
    <scope>NUCLEOTIDE SEQUENCE [LARGE SCALE GENOMIC DNA]</scope>
    <source>
        <strain>NCTC 10229</strain>
    </source>
</reference>
<protein>
    <recommendedName>
        <fullName evidence="1">Isocitrate dehydrogenase kinase/phosphatase</fullName>
        <shortName evidence="1">IDH kinase/phosphatase</shortName>
        <shortName evidence="1">IDHK/P</shortName>
        <ecNumber evidence="1">2.7.11.5</ecNumber>
        <ecNumber evidence="1">3.1.3.-</ecNumber>
    </recommendedName>
</protein>
<sequence>MNHFPKLLSSQIGFDVAQTILENFDRHYRIFREAAVEAKDLFERADWHGLQRLARERITSYDDRVRECVELLEDEYDAENIDNEVWPQIKLHYIGLLTSHRQPECAETFFNSVCCKILHRAYFNNDFIFVRPAISTEYIENDEPAAKPTYRAYYPGSEGLAATLERIVTNFQLNPPFEDLERDIACIMQAIHDEFGAFDEAVNFQIHVLSSLFYRNKTAYVVGRIINGDRVLPFAVPIRHARAGILALDTVLLRRDQLKIIFSFSHSYFLVDMNVPSAYVQFLRSIMPGKPKAEIYTSVGLQKQGKNLFYRDLLHHLSHSSDRFIVAPGIKGLVMLVFTLPSFPYVFKMIKDHFPPPKDTTREQIMAKYLLVKRHDRLGRMADTLEYSSVALPLARLDDALVRELEKEVPSLIEYEGENLVIKHLYIERRMVPLNLYLQNGSDAEIEHGVREYGNAVKELMQANIFPGDMLYKNFGVTRHGRVVFYDYDEIEYLTDCNVRRVPPPRNDEDEMSGEPWYTVGPHDIFPETYAPFLLGDPRVREHFLAHHADFFDPQLWQDSKDRLLRGELPDFFAYEPALRFCIRYPERFAPGDAADGGKLAAA</sequence>